<sequence length="362" mass="41474">MAPKQDPKPKFQEGERVLCFHGPLLYEAKCVKVAIKDKQVKYFIHYSGWNKKSAVRPRRSEKSLKTHEDIVALFPVPEGAPSVHHPLLTSSWDEWVPESRVLKYVDTNLQKQRELQKANQEQYAEGKMRGAAPGKKTSGLQQKNVEVKTKKNKQKTPGNGDGGSTSETPQPPRKKRARVDPTVENEETFMNRVEVKVKIPEELKPWLVDDWDLITRQKQLFYLPAKKNVDSILEDYANYKKSRGNTDNKEYAVNEVVAGIKEYFNVMLGTQLLYKFERPQYAEILADHPDAPMSQVYGAPHLLRLFVRIGAMLAYTPLDEKSLALLLNYLHDFLKYLAKNSATLFSASDYEVAPPEYHRKAV</sequence>
<name>MO4L1_HUMAN</name>
<comment type="function">
    <text evidence="5 8 12 13 14">Component of the NuA4 histone acetyltransferase (HAT) complex which is involved in transcriptional activation of select genes principally by acetylation of nucleosomal histones H4 and H2A. This modification may both alter nucleosome - DNA interactions and promote interaction of the modified histones with other proteins which positively regulate transcription. This complex may be required for the activation of transcriptional programs associated with oncogene and proto-oncogene mediated growth induction, tumor suppressor mediated growth arrest and replicative senescence, apoptosis, and DNA repair. The NuA4 complex ATPase and helicase activities seem to be, at least in part, contributed by the association of RUVBL1 and RUVBL2 with EP400. NuA4 may also play a direct role in DNA repair when directly recruited to sites of DNA damage. As part of the SIN3B complex represses transcription and counteracts the histone acetyltransferase activity of EP300 through the recognition H3K27ac marks by PHF12 and the activity of the histone deacetylase HDAC2 (PubMed:12391155, PubMed:14966270, PubMed:37137925). SIN3B complex is recruited downstream of the constitutively active genes transcriptional start sites through interaction with histones and mitigates histone acetylation and RNA polymerase II progression within transcribed regions contributing to the regulation of transcription (PubMed:21041482). Required for homologous recombination repair (HRR) and resistance to mitomycin C (MMC). Involved in the localization of PALB2, BRCA2 and RAD51, but not BRCA1, to DNA-damage foci.</text>
</comment>
<comment type="subunit">
    <text evidence="4 5 6 7 8 10 11 12 13 14">Component of the NuA4 histone acetyltransferase complex which contains the catalytic subunit KAT5/TIP60 and the subunits EP400, TRRAP/PAF400, BRD8/SMAP, EPC1, DMAP1/DNMAP1, RUVBL1/TIP49, RUVBL2, ING3, actin, ACTL6A/BAF53A, MORF4L1/MRG15, MORF4L2/MRGX, MRGBP, YEATS4/GAS41, VPS72/YL1 and MEAF6. The NuA4 complex interacts with MYC and the adenovirus E1A protein. MORF4L1 may also participate in the formation of NuA4 related complexes which lack the KAT5/TIP60 catalytic subunit, but which include the SWI/SNF related protein SRCAP. Component of the mSin3A histone deacetylase complex, which includes SIN3A, HDAC2, ARID4B, MORF4L1, RBBP4/RbAp48, and RBBP7/RbAp46 (PubMed:12391155, PubMed:14966270). May also interact with PHF12 and one or more as yet undefined members of the TLE (transducin-like enhancer of split) family of transcriptional repressors (PubMed:12391155). Component of the SIN3B complex, which includes SIN3B, HDAC2 or HDAC1, PHF12 and MORF4L1 (PubMed:21041482, PubMed:37137925). Interacts with RB1 and KAT8. Interacts with the N-terminus of MRFAP1. Found in a complex composed of MORF4L1, MRFAP1 and RB1. Interacts with the entire BRCA complex, which contains BRCA1, PALB2, BRCA2 and RAD51. Interacts with PALB2. Forms a complex with MSL1 and NUPR1.</text>
</comment>
<comment type="interaction">
    <interactant intactId="EBI-399246">
        <id>Q9UBU8</id>
    </interactant>
    <interactant intactId="EBI-2875665">
        <id>Q96B67</id>
        <label>ARRDC3</label>
    </interactant>
    <organismsDiffer>false</organismsDiffer>
    <experiments>3</experiments>
</comment>
<comment type="interaction">
    <interactant intactId="EBI-399246">
        <id>Q9UBU8</id>
    </interactant>
    <interactant intactId="EBI-10181188">
        <id>Q8N7W2-2</id>
        <label>BEND7</label>
    </interactant>
    <organismsDiffer>false</organismsDiffer>
    <experiments>3</experiments>
</comment>
<comment type="interaction">
    <interactant intactId="EBI-399246">
        <id>Q9UBU8</id>
    </interactant>
    <interactant intactId="EBI-1058722">
        <id>Q13554</id>
        <label>CAMK2B</label>
    </interactant>
    <organismsDiffer>false</organismsDiffer>
    <experiments>3</experiments>
</comment>
<comment type="interaction">
    <interactant intactId="EBI-399246">
        <id>Q9UBU8</id>
    </interactant>
    <interactant intactId="EBI-10181988">
        <id>Q8IYX8-2</id>
        <label>CEP57L1</label>
    </interactant>
    <organismsDiffer>false</organismsDiffer>
    <experiments>3</experiments>
</comment>
<comment type="interaction">
    <interactant intactId="EBI-399246">
        <id>Q9UBU8</id>
    </interactant>
    <interactant intactId="EBI-10175124">
        <id>Q8IZU0</id>
        <label>FAM9B</label>
    </interactant>
    <organismsDiffer>false</organismsDiffer>
    <experiments>3</experiments>
</comment>
<comment type="interaction">
    <interactant intactId="EBI-399246">
        <id>Q9UBU8</id>
    </interactant>
    <interactant intactId="EBI-10172181">
        <id>Q53SE7</id>
        <label>FLJ13057</label>
    </interactant>
    <organismsDiffer>false</organismsDiffer>
    <experiments>3</experiments>
</comment>
<comment type="interaction">
    <interactant intactId="EBI-399246">
        <id>Q9UBU8</id>
    </interactant>
    <interactant intactId="EBI-740459">
        <id>P51116</id>
        <label>FXR2</label>
    </interactant>
    <organismsDiffer>false</organismsDiffer>
    <experiments>3</experiments>
</comment>
<comment type="interaction">
    <interactant intactId="EBI-399246">
        <id>Q9UBU8</id>
    </interactant>
    <interactant intactId="EBI-618309">
        <id>Q08379</id>
        <label>GOLGA2</label>
    </interactant>
    <organismsDiffer>false</organismsDiffer>
    <experiments>3</experiments>
</comment>
<comment type="interaction">
    <interactant intactId="EBI-399246">
        <id>Q9UBU8</id>
    </interactant>
    <interactant intactId="EBI-2549423">
        <id>Q6NT76</id>
        <label>HMBOX1</label>
    </interactant>
    <organismsDiffer>false</organismsDiffer>
    <experiments>3</experiments>
</comment>
<comment type="interaction">
    <interactant intactId="EBI-399246">
        <id>Q9UBU8</id>
    </interactant>
    <interactant intactId="EBI-10212206">
        <id>Q6NT76-2</id>
        <label>HMBOX1</label>
    </interactant>
    <organismsDiffer>false</organismsDiffer>
    <experiments>3</experiments>
</comment>
<comment type="interaction">
    <interactant intactId="EBI-399246">
        <id>Q9UBU8</id>
    </interactant>
    <interactant intactId="EBI-745305">
        <id>Q13422</id>
        <label>IKZF1</label>
    </interactant>
    <organismsDiffer>false</organismsDiffer>
    <experiments>3</experiments>
</comment>
<comment type="interaction">
    <interactant intactId="EBI-399246">
        <id>Q9UBU8</id>
    </interactant>
    <interactant intactId="EBI-2686809">
        <id>Q96JM7</id>
        <label>L3MBTL3</label>
    </interactant>
    <organismsDiffer>false</organismsDiffer>
    <experiments>3</experiments>
</comment>
<comment type="interaction">
    <interactant intactId="EBI-399246">
        <id>Q9UBU8</id>
    </interactant>
    <interactant intactId="EBI-741037">
        <id>Q9BRK4</id>
        <label>LZTS2</label>
    </interactant>
    <organismsDiffer>false</organismsDiffer>
    <experiments>3</experiments>
</comment>
<comment type="interaction">
    <interactant intactId="EBI-399246">
        <id>Q9UBU8</id>
    </interactant>
    <interactant intactId="EBI-2864512">
        <id>P50221</id>
        <label>MEOX1</label>
    </interactant>
    <organismsDiffer>false</organismsDiffer>
    <experiments>3</experiments>
</comment>
<comment type="interaction">
    <interactant intactId="EBI-399246">
        <id>Q9UBU8</id>
    </interactant>
    <interactant intactId="EBI-995714">
        <id>Q9Y605</id>
        <label>MRFAP1</label>
    </interactant>
    <organismsDiffer>false</organismsDiffer>
    <experiments>10</experiments>
</comment>
<comment type="interaction">
    <interactant intactId="EBI-399246">
        <id>Q9UBU8</id>
    </interactant>
    <interactant intactId="EBI-748896">
        <id>Q96HT8</id>
        <label>MRFAP1L1</label>
    </interactant>
    <organismsDiffer>false</organismsDiffer>
    <experiments>12</experiments>
</comment>
<comment type="interaction">
    <interactant intactId="EBI-399246">
        <id>Q9UBU8</id>
    </interactant>
    <interactant intactId="EBI-399076">
        <id>Q9NV56</id>
        <label>MRGBP</label>
    </interactant>
    <organismsDiffer>false</organismsDiffer>
    <experiments>10</experiments>
</comment>
<comment type="interaction">
    <interactant intactId="EBI-399246">
        <id>Q9UBU8</id>
    </interactant>
    <interactant intactId="EBI-8641936">
        <id>Q15742</id>
        <label>NAB2</label>
    </interactant>
    <organismsDiffer>false</organismsDiffer>
    <experiments>3</experiments>
</comment>
<comment type="interaction">
    <interactant intactId="EBI-399246">
        <id>Q9UBU8</id>
    </interactant>
    <interactant intactId="EBI-741200">
        <id>Q8IVL1</id>
        <label>NAV2</label>
    </interactant>
    <organismsDiffer>false</organismsDiffer>
    <experiments>3</experiments>
</comment>
<comment type="interaction">
    <interactant intactId="EBI-399246">
        <id>Q9UBU8</id>
    </interactant>
    <interactant intactId="EBI-740845">
        <id>Q96AQ6</id>
        <label>PBXIP1</label>
    </interactant>
    <organismsDiffer>false</organismsDiffer>
    <experiments>3</experiments>
</comment>
<comment type="interaction">
    <interactant intactId="EBI-399246">
        <id>Q9UBU8</id>
    </interactant>
    <interactant intactId="EBI-717233">
        <id>Q9H0H5</id>
        <label>RACGAP1</label>
    </interactant>
    <organismsDiffer>false</organismsDiffer>
    <experiments>3</experiments>
</comment>
<comment type="interaction">
    <interactant intactId="EBI-399246">
        <id>Q9UBU8</id>
    </interactant>
    <interactant intactId="EBI-307352">
        <id>Q04864</id>
        <label>REL</label>
    </interactant>
    <organismsDiffer>false</organismsDiffer>
    <experiments>3</experiments>
</comment>
<comment type="interaction">
    <interactant intactId="EBI-399246">
        <id>Q9UBU8</id>
    </interactant>
    <interactant intactId="EBI-717422">
        <id>Q12800</id>
        <label>TFCP2</label>
    </interactant>
    <organismsDiffer>false</organismsDiffer>
    <experiments>3</experiments>
</comment>
<comment type="interaction">
    <interactant intactId="EBI-399246">
        <id>Q9UBU8</id>
    </interactant>
    <interactant intactId="EBI-741515">
        <id>Q9NVV9</id>
        <label>THAP1</label>
    </interactant>
    <organismsDiffer>false</organismsDiffer>
    <experiments>3</experiments>
</comment>
<comment type="interaction">
    <interactant intactId="EBI-399246">
        <id>Q9UBU8</id>
    </interactant>
    <interactant intactId="EBI-357849">
        <id>Q15025</id>
        <label>TNIP1</label>
    </interactant>
    <organismsDiffer>false</organismsDiffer>
    <experiments>4</experiments>
</comment>
<comment type="interaction">
    <interactant intactId="EBI-399246">
        <id>Q9UBU8</id>
    </interactant>
    <interactant intactId="EBI-726527">
        <id>P13805</id>
        <label>TNNT1</label>
    </interactant>
    <organismsDiffer>false</organismsDiffer>
    <experiments>3</experiments>
</comment>
<comment type="interaction">
    <interactant intactId="EBI-399246">
        <id>Q9UBU8</id>
    </interactant>
    <interactant intactId="EBI-725997">
        <id>Q8WV44</id>
        <label>TRIM41</label>
    </interactant>
    <organismsDiffer>false</organismsDiffer>
    <experiments>3</experiments>
</comment>
<comment type="interaction">
    <interactant intactId="EBI-399246">
        <id>Q9UBU8</id>
    </interactant>
    <interactant intactId="EBI-10235384">
        <id>Q96DT7</id>
        <label>ZBTB10</label>
    </interactant>
    <organismsDiffer>false</organismsDiffer>
    <experiments>3</experiments>
</comment>
<comment type="interaction">
    <interactant intactId="EBI-399246">
        <id>Q9UBU8</id>
    </interactant>
    <interactant intactId="EBI-395708">
        <id>Q96C00</id>
        <label>ZBTB9</label>
    </interactant>
    <organismsDiffer>false</organismsDiffer>
    <experiments>4</experiments>
</comment>
<comment type="interaction">
    <interactant intactId="EBI-399246">
        <id>Q9UBU8</id>
    </interactant>
    <interactant intactId="EBI-25475856">
        <id>P0DTC9</id>
        <label>N</label>
    </interactant>
    <organismsDiffer>true</organismsDiffer>
    <experiments>4</experiments>
</comment>
<comment type="interaction">
    <interactant intactId="EBI-10288852">
        <id>Q9UBU8-2</id>
    </interactant>
    <interactant intactId="EBI-5458244">
        <id>Q99856</id>
        <label>ARID3A</label>
    </interactant>
    <organismsDiffer>false</organismsDiffer>
    <experiments>3</experiments>
</comment>
<comment type="interaction">
    <interactant intactId="EBI-10288852">
        <id>Q9UBU8-2</id>
    </interactant>
    <interactant intactId="EBI-2875665">
        <id>Q96B67</id>
        <label>ARRDC3</label>
    </interactant>
    <organismsDiffer>false</organismsDiffer>
    <experiments>3</experiments>
</comment>
<comment type="interaction">
    <interactant intactId="EBI-10288852">
        <id>Q9UBU8-2</id>
    </interactant>
    <interactant intactId="EBI-10243741">
        <id>Q5H9J7</id>
        <label>BEX5</label>
    </interactant>
    <organismsDiffer>false</organismsDiffer>
    <experiments>3</experiments>
</comment>
<comment type="interaction">
    <interactant intactId="EBI-10288852">
        <id>Q9UBU8-2</id>
    </interactant>
    <interactant intactId="EBI-1058722">
        <id>Q13554</id>
        <label>CAMK2B</label>
    </interactant>
    <organismsDiffer>false</organismsDiffer>
    <experiments>3</experiments>
</comment>
<comment type="interaction">
    <interactant intactId="EBI-10288852">
        <id>Q9UBU8-2</id>
    </interactant>
    <interactant intactId="EBI-11523526">
        <id>Q13554-3</id>
        <label>CAMK2B</label>
    </interactant>
    <organismsDiffer>false</organismsDiffer>
    <experiments>3</experiments>
</comment>
<comment type="interaction">
    <interactant intactId="EBI-10288852">
        <id>Q9UBU8-2</id>
    </interactant>
    <interactant intactId="EBI-18939574">
        <id>Q6UX04-2</id>
        <label>CWC27</label>
    </interactant>
    <organismsDiffer>false</organismsDiffer>
    <experiments>3</experiments>
</comment>
<comment type="interaction">
    <interactant intactId="EBI-10288852">
        <id>Q9UBU8-2</id>
    </interactant>
    <interactant intactId="EBI-742054">
        <id>Q96D03</id>
        <label>DDIT4L</label>
    </interactant>
    <organismsDiffer>false</organismsDiffer>
    <experiments>3</experiments>
</comment>
<comment type="interaction">
    <interactant intactId="EBI-10288852">
        <id>Q9UBU8-2</id>
    </interactant>
    <interactant intactId="EBI-399105">
        <id>Q9NPF5</id>
        <label>DMAP1</label>
    </interactant>
    <organismsDiffer>false</organismsDiffer>
    <experiments>4</experiments>
</comment>
<comment type="interaction">
    <interactant intactId="EBI-10288852">
        <id>Q9UBU8-2</id>
    </interactant>
    <interactant intactId="EBI-712941">
        <id>Q14919</id>
        <label>DRAP1</label>
    </interactant>
    <organismsDiffer>false</organismsDiffer>
    <experiments>3</experiments>
</comment>
<comment type="interaction">
    <interactant intactId="EBI-10288852">
        <id>Q9UBU8-2</id>
    </interactant>
    <interactant intactId="EBI-751248">
        <id>Q8NE31</id>
        <label>FAM13C</label>
    </interactant>
    <organismsDiffer>false</organismsDiffer>
    <experiments>3</experiments>
</comment>
<comment type="interaction">
    <interactant intactId="EBI-10288852">
        <id>Q9UBU8-2</id>
    </interactant>
    <interactant intactId="EBI-12063229">
        <id>Q8IX29</id>
        <label>FBXO16</label>
    </interactant>
    <organismsDiffer>false</organismsDiffer>
    <experiments>3</experiments>
</comment>
<comment type="interaction">
    <interactant intactId="EBI-10288852">
        <id>Q9UBU8-2</id>
    </interactant>
    <interactant intactId="EBI-740459">
        <id>P51116</id>
        <label>FXR2</label>
    </interactant>
    <organismsDiffer>false</organismsDiffer>
    <experiments>3</experiments>
</comment>
<comment type="interaction">
    <interactant intactId="EBI-10288852">
        <id>Q9UBU8-2</id>
    </interactant>
    <interactant intactId="EBI-2548508">
        <id>Q96IK5</id>
        <label>GMCL1</label>
    </interactant>
    <organismsDiffer>false</organismsDiffer>
    <experiments>3</experiments>
</comment>
<comment type="interaction">
    <interactant intactId="EBI-10288852">
        <id>Q9UBU8-2</id>
    </interactant>
    <interactant intactId="EBI-618309">
        <id>Q08379</id>
        <label>GOLGA2</label>
    </interactant>
    <organismsDiffer>false</organismsDiffer>
    <experiments>3</experiments>
</comment>
<comment type="interaction">
    <interactant intactId="EBI-10288852">
        <id>Q9UBU8-2</id>
    </interactant>
    <interactant intactId="EBI-11163335">
        <id>Q9NYA3</id>
        <label>GOLGA6A</label>
    </interactant>
    <organismsDiffer>false</organismsDiffer>
    <experiments>3</experiments>
</comment>
<comment type="interaction">
    <interactant intactId="EBI-10288852">
        <id>Q9UBU8-2</id>
    </interactant>
    <interactant intactId="EBI-19954058">
        <id>O15499</id>
        <label>GSC2</label>
    </interactant>
    <organismsDiffer>false</organismsDiffer>
    <experiments>3</experiments>
</comment>
<comment type="interaction">
    <interactant intactId="EBI-10288852">
        <id>Q9UBU8-2</id>
    </interactant>
    <interactant intactId="EBI-2549423">
        <id>Q6NT76</id>
        <label>HMBOX1</label>
    </interactant>
    <organismsDiffer>false</organismsDiffer>
    <experiments>3</experiments>
</comment>
<comment type="interaction">
    <interactant intactId="EBI-10288852">
        <id>Q9UBU8-2</id>
    </interactant>
    <interactant intactId="EBI-740641">
        <id>Q9NP66</id>
        <label>HMG20A</label>
    </interactant>
    <organismsDiffer>false</organismsDiffer>
    <experiments>3</experiments>
</comment>
<comment type="interaction">
    <interactant intactId="EBI-10288852">
        <id>Q9UBU8-2</id>
    </interactant>
    <interactant intactId="EBI-349938">
        <id>P52292</id>
        <label>KPNA2</label>
    </interactant>
    <organismsDiffer>false</organismsDiffer>
    <experiments>3</experiments>
</comment>
<comment type="interaction">
    <interactant intactId="EBI-10288852">
        <id>Q9UBU8-2</id>
    </interactant>
    <interactant intactId="EBI-11985629">
        <id>Q96JM7-2</id>
        <label>L3MBTL3</label>
    </interactant>
    <organismsDiffer>false</organismsDiffer>
    <experiments>3</experiments>
</comment>
<comment type="interaction">
    <interactant intactId="EBI-10288852">
        <id>Q9UBU8-2</id>
    </interactant>
    <interactant intactId="EBI-12179869">
        <id>P50458</id>
        <label>LHX2</label>
    </interactant>
    <organismsDiffer>false</organismsDiffer>
    <experiments>3</experiments>
</comment>
<comment type="interaction">
    <interactant intactId="EBI-10288852">
        <id>Q9UBU8-2</id>
    </interactant>
    <interactant intactId="EBI-741037">
        <id>Q9BRK4</id>
        <label>LZTS2</label>
    </interactant>
    <organismsDiffer>false</organismsDiffer>
    <experiments>3</experiments>
</comment>
<comment type="interaction">
    <interactant intactId="EBI-10288852">
        <id>Q9UBU8-2</id>
    </interactant>
    <interactant intactId="EBI-16439278">
        <id>Q6FHY5</id>
        <label>MEOX2</label>
    </interactant>
    <organismsDiffer>false</organismsDiffer>
    <experiments>3</experiments>
</comment>
<comment type="interaction">
    <interactant intactId="EBI-10288852">
        <id>Q9UBU8-2</id>
    </interactant>
    <interactant intactId="EBI-5235884">
        <id>O00566</id>
        <label>MPHOSPH10</label>
    </interactant>
    <organismsDiffer>false</organismsDiffer>
    <experiments>3</experiments>
</comment>
<comment type="interaction">
    <interactant intactId="EBI-10288852">
        <id>Q9UBU8-2</id>
    </interactant>
    <interactant intactId="EBI-995714">
        <id>Q9Y605</id>
        <label>MRFAP1</label>
    </interactant>
    <organismsDiffer>false</organismsDiffer>
    <experiments>15</experiments>
</comment>
<comment type="interaction">
    <interactant intactId="EBI-10288852">
        <id>Q9UBU8-2</id>
    </interactant>
    <interactant intactId="EBI-748896">
        <id>Q96HT8</id>
        <label>MRFAP1L1</label>
    </interactant>
    <organismsDiffer>false</organismsDiffer>
    <experiments>27</experiments>
</comment>
<comment type="interaction">
    <interactant intactId="EBI-10288852">
        <id>Q9UBU8-2</id>
    </interactant>
    <interactant intactId="EBI-399076">
        <id>Q9NV56</id>
        <label>MRGBP</label>
    </interactant>
    <organismsDiffer>false</organismsDiffer>
    <experiments>18</experiments>
</comment>
<comment type="interaction">
    <interactant intactId="EBI-10288852">
        <id>Q9UBU8-2</id>
    </interactant>
    <interactant intactId="EBI-358272">
        <id>P52815</id>
        <label>MRPL12</label>
    </interactant>
    <organismsDiffer>false</organismsDiffer>
    <experiments>3</experiments>
</comment>
<comment type="interaction">
    <interactant intactId="EBI-10288852">
        <id>Q9UBU8-2</id>
    </interactant>
    <interactant intactId="EBI-8641936">
        <id>Q15742</id>
        <label>NAB2</label>
    </interactant>
    <organismsDiffer>false</organismsDiffer>
    <experiments>3</experiments>
</comment>
<comment type="interaction">
    <interactant intactId="EBI-10288852">
        <id>Q9UBU8-2</id>
    </interactant>
    <interactant intactId="EBI-11956853">
        <id>Q8N987</id>
        <label>NECAB1</label>
    </interactant>
    <organismsDiffer>false</organismsDiffer>
    <experiments>3</experiments>
</comment>
<comment type="interaction">
    <interactant intactId="EBI-10288852">
        <id>Q9UBU8-2</id>
    </interactant>
    <interactant intactId="EBI-1538217">
        <id>Q969G9</id>
        <label>NKD1</label>
    </interactant>
    <organismsDiffer>false</organismsDiffer>
    <experiments>3</experiments>
</comment>
<comment type="interaction">
    <interactant intactId="EBI-10288852">
        <id>Q9UBU8-2</id>
    </interactant>
    <interactant intactId="EBI-1222653">
        <id>Q86YC2</id>
        <label>PALB2</label>
    </interactant>
    <organismsDiffer>false</organismsDiffer>
    <experiments>3</experiments>
</comment>
<comment type="interaction">
    <interactant intactId="EBI-10288852">
        <id>Q9UBU8-2</id>
    </interactant>
    <interactant intactId="EBI-740845">
        <id>Q96AQ6</id>
        <label>PBXIP1</label>
    </interactant>
    <organismsDiffer>false</organismsDiffer>
    <experiments>3</experiments>
</comment>
<comment type="interaction">
    <interactant intactId="EBI-10288852">
        <id>Q9UBU8-2</id>
    </interactant>
    <interactant intactId="EBI-2803760">
        <id>Q96QT6</id>
        <label>PHF12</label>
    </interactant>
    <organismsDiffer>false</organismsDiffer>
    <experiments>6</experiments>
</comment>
<comment type="interaction">
    <interactant intactId="EBI-10288852">
        <id>Q9UBU8-2</id>
    </interactant>
    <interactant intactId="EBI-10293106">
        <id>Q96QT6-2</id>
        <label>PHF12</label>
    </interactant>
    <organismsDiffer>false</organismsDiffer>
    <experiments>3</experiments>
</comment>
<comment type="interaction">
    <interactant intactId="EBI-10288852">
        <id>Q9UBU8-2</id>
    </interactant>
    <interactant intactId="EBI-14066006">
        <id>Q4G0R1</id>
        <label>PIBF1</label>
    </interactant>
    <organismsDiffer>false</organismsDiffer>
    <experiments>3</experiments>
</comment>
<comment type="interaction">
    <interactant intactId="EBI-10288852">
        <id>Q9UBU8-2</id>
    </interactant>
    <interactant intactId="EBI-79165">
        <id>Q9NRD5</id>
        <label>PICK1</label>
    </interactant>
    <organismsDiffer>false</organismsDiffer>
    <experiments>3</experiments>
</comment>
<comment type="interaction">
    <interactant intactId="EBI-10288852">
        <id>Q9UBU8-2</id>
    </interactant>
    <interactant intactId="EBI-11079894">
        <id>Q9HB20</id>
        <label>PLEKHA3</label>
    </interactant>
    <organismsDiffer>false</organismsDiffer>
    <experiments>3</experiments>
</comment>
<comment type="interaction">
    <interactant intactId="EBI-10288852">
        <id>Q9UBU8-2</id>
    </interactant>
    <interactant intactId="EBI-742404">
        <id>O95199</id>
        <label>RCBTB2</label>
    </interactant>
    <organismsDiffer>false</organismsDiffer>
    <experiments>3</experiments>
</comment>
<comment type="interaction">
    <interactant intactId="EBI-10288852">
        <id>Q9UBU8-2</id>
    </interactant>
    <interactant intactId="EBI-12820047">
        <id>Q17R54</id>
        <label>SYN3</label>
    </interactant>
    <organismsDiffer>false</organismsDiffer>
    <experiments>3</experiments>
</comment>
<comment type="interaction">
    <interactant intactId="EBI-10288852">
        <id>Q9UBU8-2</id>
    </interactant>
    <interactant intactId="EBI-11139477">
        <id>Q96N21</id>
        <label>TEPSIN</label>
    </interactant>
    <organismsDiffer>false</organismsDiffer>
    <experiments>3</experiments>
</comment>
<comment type="interaction">
    <interactant intactId="EBI-10288852">
        <id>Q9UBU8-2</id>
    </interactant>
    <interactant intactId="EBI-717422">
        <id>Q12800</id>
        <label>TFCP2</label>
    </interactant>
    <organismsDiffer>false</organismsDiffer>
    <experiments>3</experiments>
</comment>
<comment type="interaction">
    <interactant intactId="EBI-10288852">
        <id>Q9UBU8-2</id>
    </interactant>
    <interactant intactId="EBI-11741437">
        <id>Q08117-2</id>
        <label>TLE5</label>
    </interactant>
    <organismsDiffer>false</organismsDiffer>
    <experiments>3</experiments>
</comment>
<comment type="interaction">
    <interactant intactId="EBI-10288852">
        <id>Q9UBU8-2</id>
    </interactant>
    <interactant intactId="EBI-17559309">
        <id>P45379-11</id>
        <label>TNNT2</label>
    </interactant>
    <organismsDiffer>false</organismsDiffer>
    <experiments>3</experiments>
</comment>
<comment type="interaction">
    <interactant intactId="EBI-10288852">
        <id>Q9UBU8-2</id>
    </interactant>
    <interactant intactId="EBI-355744">
        <id>Q12933</id>
        <label>TRAF2</label>
    </interactant>
    <organismsDiffer>false</organismsDiffer>
    <experiments>3</experiments>
</comment>
<comment type="interaction">
    <interactant intactId="EBI-10288852">
        <id>Q9UBU8-2</id>
    </interactant>
    <interactant intactId="EBI-725997">
        <id>Q8WV44</id>
        <label>TRIM41</label>
    </interactant>
    <organismsDiffer>false</organismsDiffer>
    <experiments>5</experiments>
</comment>
<comment type="interaction">
    <interactant intactId="EBI-10288852">
        <id>Q9UBU8-2</id>
    </interactant>
    <interactant intactId="EBI-2795133">
        <id>Q9NZI7</id>
        <label>UBP1</label>
    </interactant>
    <organismsDiffer>false</organismsDiffer>
    <experiments>3</experiments>
</comment>
<comment type="interaction">
    <interactant intactId="EBI-10288852">
        <id>Q9UBU8-2</id>
    </interactant>
    <interactant intactId="EBI-1043891">
        <id>O75436</id>
        <label>VPS26A</label>
    </interactant>
    <organismsDiffer>false</organismsDiffer>
    <experiments>3</experiments>
</comment>
<comment type="interaction">
    <interactant intactId="EBI-10288852">
        <id>Q9UBU8-2</id>
    </interactant>
    <interactant intactId="EBI-714455">
        <id>Q9Y2W2</id>
        <label>WBP11</label>
    </interactant>
    <organismsDiffer>false</organismsDiffer>
    <experiments>3</experiments>
</comment>
<comment type="interaction">
    <interactant intactId="EBI-10288852">
        <id>Q9UBU8-2</id>
    </interactant>
    <interactant intactId="EBI-3918996">
        <id>Q9HCK0</id>
        <label>ZBTB26</label>
    </interactant>
    <organismsDiffer>false</organismsDiffer>
    <experiments>3</experiments>
</comment>
<comment type="interaction">
    <interactant intactId="EBI-10288852">
        <id>Q9UBU8-2</id>
    </interactant>
    <interactant intactId="EBI-740718">
        <id>O43298</id>
        <label>ZBTB43</label>
    </interactant>
    <organismsDiffer>false</organismsDiffer>
    <experiments>3</experiments>
</comment>
<comment type="interaction">
    <interactant intactId="EBI-10288852">
        <id>Q9UBU8-2</id>
    </interactant>
    <interactant intactId="EBI-17494306">
        <id>Q8NAP8</id>
        <label>ZBTB8B</label>
    </interactant>
    <organismsDiffer>false</organismsDiffer>
    <experiments>3</experiments>
</comment>
<comment type="interaction">
    <interactant intactId="EBI-10288852">
        <id>Q9UBU8-2</id>
    </interactant>
    <interactant intactId="EBI-395708">
        <id>Q96C00</id>
        <label>ZBTB9</label>
    </interactant>
    <organismsDiffer>false</organismsDiffer>
    <experiments>3</experiments>
</comment>
<comment type="interaction">
    <interactant intactId="EBI-10288852">
        <id>Q9UBU8-2</id>
    </interactant>
    <interactant intactId="EBI-12242934">
        <id>Q8IWR0-2</id>
        <label>ZC3H7A</label>
    </interactant>
    <organismsDiffer>false</organismsDiffer>
    <experiments>3</experiments>
</comment>
<comment type="interaction">
    <interactant intactId="EBI-10288852">
        <id>Q9UBU8-2</id>
    </interactant>
    <interactant intactId="EBI-750821">
        <id>Q8N554</id>
        <label>ZNF276</label>
    </interactant>
    <organismsDiffer>false</organismsDiffer>
    <experiments>3</experiments>
</comment>
<comment type="interaction">
    <interactant intactId="EBI-10288852">
        <id>Q9UBU8-2</id>
    </interactant>
    <interactant intactId="EBI-11962468">
        <id>Q7Z4V0</id>
        <label>ZNF438</label>
    </interactant>
    <organismsDiffer>false</organismsDiffer>
    <experiments>3</experiments>
</comment>
<comment type="interaction">
    <interactant intactId="EBI-10288852">
        <id>Q9UBU8-2</id>
    </interactant>
    <interactant intactId="EBI-10215956">
        <id>Q6P9G9</id>
        <label>ZNF449</label>
    </interactant>
    <organismsDiffer>false</organismsDiffer>
    <experiments>3</experiments>
</comment>
<comment type="interaction">
    <interactant intactId="EBI-10288852">
        <id>Q9UBU8-2</id>
    </interactant>
    <interactant intactId="EBI-15963335">
        <id>Q5SPL2</id>
        <label>Phf12</label>
    </interactant>
    <organismsDiffer>true</organismsDiffer>
    <experiments>2</experiments>
</comment>
<comment type="subcellular location">
    <subcellularLocation>
        <location evidence="24">Nucleus</location>
    </subcellularLocation>
</comment>
<comment type="alternative products">
    <event type="alternative splicing"/>
    <isoform>
        <id>Q9UBU8-1</id>
        <name>1</name>
        <sequence type="displayed"/>
    </isoform>
    <isoform>
        <id>Q9UBU8-2</id>
        <name>2</name>
        <sequence type="described" ref="VSP_012889"/>
    </isoform>
    <isoform>
        <id>Q9UBU8-3</id>
        <name>3</name>
        <sequence type="described" ref="VSP_046016"/>
    </isoform>
</comment>
<comment type="sequence caution" evidence="23">
    <conflict type="frameshift">
        <sequence resource="EMBL-CDS" id="AAG17253"/>
    </conflict>
</comment>
<accession>Q9UBU8</accession>
<accession>B4DKN6</accession>
<accession>B7Z6R1</accession>
<accession>D3DW88</accession>
<accession>O95899</accession>
<accession>Q5QTS1</accession>
<accession>Q6NVX8</accession>
<accession>Q86YT7</accession>
<accession>Q9HBP6</accession>
<accession>Q9NSW5</accession>
<dbReference type="EMBL" id="AF100615">
    <property type="protein sequence ID" value="AAD29872.1"/>
    <property type="molecule type" value="mRNA"/>
</dbReference>
<dbReference type="EMBL" id="AF167173">
    <property type="protein sequence ID" value="AAF80854.1"/>
    <property type="molecule type" value="mRNA"/>
</dbReference>
<dbReference type="EMBL" id="AF218011">
    <property type="protein sequence ID" value="AAG17253.1"/>
    <property type="status" value="ALT_FRAME"/>
    <property type="molecule type" value="mRNA"/>
</dbReference>
<dbReference type="EMBL" id="AY148481">
    <property type="protein sequence ID" value="AAN65338.1"/>
    <property type="molecule type" value="mRNA"/>
</dbReference>
<dbReference type="EMBL" id="AF070664">
    <property type="protein sequence ID" value="AAD20970.1"/>
    <property type="molecule type" value="mRNA"/>
</dbReference>
<dbReference type="EMBL" id="AF161546">
    <property type="protein sequence ID" value="AAF29033.1"/>
    <property type="molecule type" value="mRNA"/>
</dbReference>
<dbReference type="EMBL" id="AF109188">
    <property type="protein sequence ID" value="AAQ13497.1"/>
    <property type="molecule type" value="mRNA"/>
</dbReference>
<dbReference type="EMBL" id="AK296650">
    <property type="protein sequence ID" value="BAG59248.1"/>
    <property type="molecule type" value="mRNA"/>
</dbReference>
<dbReference type="EMBL" id="AK300789">
    <property type="protein sequence ID" value="BAH13347.1"/>
    <property type="molecule type" value="mRNA"/>
</dbReference>
<dbReference type="EMBL" id="AL137697">
    <property type="protein sequence ID" value="CAB70879.2"/>
    <property type="molecule type" value="mRNA"/>
</dbReference>
<dbReference type="EMBL" id="AC011944">
    <property type="status" value="NOT_ANNOTATED_CDS"/>
    <property type="molecule type" value="Genomic_DNA"/>
</dbReference>
<dbReference type="EMBL" id="AC022748">
    <property type="status" value="NOT_ANNOTATED_CDS"/>
    <property type="molecule type" value="Genomic_DNA"/>
</dbReference>
<dbReference type="EMBL" id="AC103975">
    <property type="status" value="NOT_ANNOTATED_CDS"/>
    <property type="molecule type" value="Genomic_DNA"/>
</dbReference>
<dbReference type="EMBL" id="CH471136">
    <property type="protein sequence ID" value="EAW99145.1"/>
    <property type="molecule type" value="Genomic_DNA"/>
</dbReference>
<dbReference type="EMBL" id="CH471136">
    <property type="protein sequence ID" value="EAW99144.1"/>
    <property type="molecule type" value="Genomic_DNA"/>
</dbReference>
<dbReference type="EMBL" id="CH471136">
    <property type="protein sequence ID" value="EAW99146.1"/>
    <property type="molecule type" value="Genomic_DNA"/>
</dbReference>
<dbReference type="EMBL" id="CH471136">
    <property type="protein sequence ID" value="EAW99147.1"/>
    <property type="molecule type" value="Genomic_DNA"/>
</dbReference>
<dbReference type="EMBL" id="BC022845">
    <property type="protein sequence ID" value="AAH22845.1"/>
    <property type="molecule type" value="mRNA"/>
</dbReference>
<dbReference type="EMBL" id="BC002936">
    <property type="protein sequence ID" value="AAH02936.1"/>
    <property type="molecule type" value="mRNA"/>
</dbReference>
<dbReference type="EMBL" id="BC067826">
    <property type="protein sequence ID" value="AAH67826.1"/>
    <property type="molecule type" value="mRNA"/>
</dbReference>
<dbReference type="EMBL" id="CX165647">
    <property type="status" value="NOT_ANNOTATED_CDS"/>
    <property type="molecule type" value="mRNA"/>
</dbReference>
<dbReference type="EMBL" id="AF131847">
    <property type="protein sequence ID" value="AAD20058.1"/>
    <property type="molecule type" value="mRNA"/>
</dbReference>
<dbReference type="CCDS" id="CCDS10307.1">
    <molecule id="Q9UBU8-1"/>
</dbReference>
<dbReference type="CCDS" id="CCDS32304.1">
    <molecule id="Q9UBU8-2"/>
</dbReference>
<dbReference type="CCDS" id="CCDS58393.1">
    <molecule id="Q9UBU8-3"/>
</dbReference>
<dbReference type="PIR" id="T46285">
    <property type="entry name" value="T46285"/>
</dbReference>
<dbReference type="RefSeq" id="NP_001252532.1">
    <molecule id="Q9UBU8-3"/>
    <property type="nucleotide sequence ID" value="NM_001265603.2"/>
</dbReference>
<dbReference type="RefSeq" id="NP_001252533.1">
    <molecule id="Q9UBU8-3"/>
    <property type="nucleotide sequence ID" value="NM_001265604.2"/>
</dbReference>
<dbReference type="RefSeq" id="NP_001252534.1">
    <molecule id="Q9UBU8-3"/>
    <property type="nucleotide sequence ID" value="NM_001265605.2"/>
</dbReference>
<dbReference type="RefSeq" id="NP_006782.1">
    <molecule id="Q9UBU8-2"/>
    <property type="nucleotide sequence ID" value="NM_006791.4"/>
</dbReference>
<dbReference type="RefSeq" id="NP_996670.1">
    <molecule id="Q9UBU8-1"/>
    <property type="nucleotide sequence ID" value="NM_206839.3"/>
</dbReference>
<dbReference type="PDB" id="2AQL">
    <property type="method" value="X-ray"/>
    <property type="resolution" value="2.30 A"/>
    <property type="chains" value="A/B=190-362"/>
</dbReference>
<dbReference type="PDB" id="2EFI">
    <property type="method" value="NMR"/>
    <property type="chains" value="A=1-132"/>
</dbReference>
<dbReference type="PDB" id="2F5J">
    <property type="method" value="X-ray"/>
    <property type="resolution" value="2.20 A"/>
    <property type="chains" value="A/B=190-360"/>
</dbReference>
<dbReference type="PDB" id="2F5K">
    <property type="method" value="X-ray"/>
    <property type="resolution" value="2.20 A"/>
    <property type="chains" value="A/B/C/D/E/F=1-129"/>
</dbReference>
<dbReference type="PDB" id="2LKM">
    <property type="method" value="NMR"/>
    <property type="chains" value="B=194-362"/>
</dbReference>
<dbReference type="PDB" id="2N1D">
    <property type="method" value="NMR"/>
    <property type="chains" value="B=194-362"/>
</dbReference>
<dbReference type="PDB" id="6AGO">
    <property type="method" value="X-ray"/>
    <property type="resolution" value="3.10 A"/>
    <property type="chains" value="C/D=190-361"/>
</dbReference>
<dbReference type="PDB" id="6INE">
    <property type="method" value="X-ray"/>
    <property type="resolution" value="2.60 A"/>
    <property type="chains" value="B=190-362"/>
</dbReference>
<dbReference type="PDB" id="7S4A">
    <property type="method" value="X-ray"/>
    <property type="resolution" value="2.69 A"/>
    <property type="chains" value="A/C=191-362"/>
</dbReference>
<dbReference type="PDB" id="8BPA">
    <property type="method" value="EM"/>
    <property type="resolution" value="3.70 A"/>
    <property type="chains" value="D=1-362"/>
</dbReference>
<dbReference type="PDB" id="8C60">
    <property type="method" value="EM"/>
    <property type="resolution" value="3.40 A"/>
    <property type="chains" value="D=1-362"/>
</dbReference>
<dbReference type="PDBsum" id="2AQL"/>
<dbReference type="PDBsum" id="2EFI"/>
<dbReference type="PDBsum" id="2F5J"/>
<dbReference type="PDBsum" id="2F5K"/>
<dbReference type="PDBsum" id="2LKM"/>
<dbReference type="PDBsum" id="2N1D"/>
<dbReference type="PDBsum" id="6AGO"/>
<dbReference type="PDBsum" id="6INE"/>
<dbReference type="PDBsum" id="7S4A"/>
<dbReference type="PDBsum" id="8BPA"/>
<dbReference type="PDBsum" id="8C60"/>
<dbReference type="BMRB" id="Q9UBU8"/>
<dbReference type="EMDB" id="EMD-16147"/>
<dbReference type="EMDB" id="EMD-16449"/>
<dbReference type="SMR" id="Q9UBU8"/>
<dbReference type="BioGRID" id="116134">
    <property type="interactions" value="229"/>
</dbReference>
<dbReference type="ComplexPortal" id="CPX-978">
    <property type="entry name" value="NuA4 histone acetyltransferase complex"/>
</dbReference>
<dbReference type="CORUM" id="Q9UBU8"/>
<dbReference type="DIP" id="DIP-29017N"/>
<dbReference type="FunCoup" id="Q9UBU8">
    <property type="interactions" value="2590"/>
</dbReference>
<dbReference type="IntAct" id="Q9UBU8">
    <property type="interactions" value="160"/>
</dbReference>
<dbReference type="MINT" id="Q9UBU8"/>
<dbReference type="STRING" id="9606.ENSP00000331310"/>
<dbReference type="ChEMBL" id="CHEMBL4630863"/>
<dbReference type="GlyGen" id="Q9UBU8">
    <property type="glycosylation" value="1 site, 1 O-linked glycan (1 site)"/>
</dbReference>
<dbReference type="iPTMnet" id="Q9UBU8"/>
<dbReference type="MetOSite" id="Q9UBU8"/>
<dbReference type="PhosphoSitePlus" id="Q9UBU8"/>
<dbReference type="SwissPalm" id="Q9UBU8"/>
<dbReference type="BioMuta" id="MORF4L1"/>
<dbReference type="DMDM" id="59803121"/>
<dbReference type="jPOST" id="Q9UBU8"/>
<dbReference type="MassIVE" id="Q9UBU8"/>
<dbReference type="PaxDb" id="9606-ENSP00000331310"/>
<dbReference type="PeptideAtlas" id="Q9UBU8"/>
<dbReference type="ProteomicsDB" id="6799"/>
<dbReference type="ProteomicsDB" id="84073">
    <molecule id="Q9UBU8-1"/>
</dbReference>
<dbReference type="ProteomicsDB" id="84074">
    <molecule id="Q9UBU8-2"/>
</dbReference>
<dbReference type="Pumba" id="Q9UBU8"/>
<dbReference type="Antibodypedia" id="27748">
    <property type="antibodies" value="397 antibodies from 37 providers"/>
</dbReference>
<dbReference type="DNASU" id="10933"/>
<dbReference type="Ensembl" id="ENST00000331268.9">
    <molecule id="Q9UBU8-1"/>
    <property type="protein sequence ID" value="ENSP00000331310.5"/>
    <property type="gene ID" value="ENSG00000185787.16"/>
</dbReference>
<dbReference type="Ensembl" id="ENST00000426013.7">
    <molecule id="Q9UBU8-2"/>
    <property type="protein sequence ID" value="ENSP00000408880.2"/>
    <property type="gene ID" value="ENSG00000185787.16"/>
</dbReference>
<dbReference type="Ensembl" id="ENST00000558502.5">
    <molecule id="Q9UBU8-3"/>
    <property type="protein sequence ID" value="ENSP00000452808.1"/>
    <property type="gene ID" value="ENSG00000185787.16"/>
</dbReference>
<dbReference type="Ensembl" id="ENST00000559345.5">
    <molecule id="Q9UBU8-3"/>
    <property type="protein sequence ID" value="ENSP00000452717.1"/>
    <property type="gene ID" value="ENSG00000185787.16"/>
</dbReference>
<dbReference type="GeneID" id="10933"/>
<dbReference type="KEGG" id="hsa:10933"/>
<dbReference type="MANE-Select" id="ENST00000426013.7">
    <molecule id="Q9UBU8-2"/>
    <property type="protein sequence ID" value="ENSP00000408880.2"/>
    <property type="RefSeq nucleotide sequence ID" value="NM_006791.4"/>
    <property type="RefSeq protein sequence ID" value="NP_006782.1"/>
</dbReference>
<dbReference type="UCSC" id="uc002bel.5">
    <molecule id="Q9UBU8-1"/>
    <property type="organism name" value="human"/>
</dbReference>
<dbReference type="AGR" id="HGNC:16989"/>
<dbReference type="CTD" id="10933"/>
<dbReference type="DisGeNET" id="10933"/>
<dbReference type="GeneCards" id="MORF4L1"/>
<dbReference type="HGNC" id="HGNC:16989">
    <property type="gene designation" value="MORF4L1"/>
</dbReference>
<dbReference type="HPA" id="ENSG00000185787">
    <property type="expression patterns" value="Low tissue specificity"/>
</dbReference>
<dbReference type="MIM" id="607303">
    <property type="type" value="gene"/>
</dbReference>
<dbReference type="neXtProt" id="NX_Q9UBU8"/>
<dbReference type="OpenTargets" id="ENSG00000185787"/>
<dbReference type="PharmGKB" id="PA134895182"/>
<dbReference type="VEuPathDB" id="HostDB:ENSG00000185787"/>
<dbReference type="eggNOG" id="KOG3001">
    <property type="taxonomic scope" value="Eukaryota"/>
</dbReference>
<dbReference type="GeneTree" id="ENSGT00950000182965"/>
<dbReference type="InParanoid" id="Q9UBU8"/>
<dbReference type="OMA" id="GLQTYFD"/>
<dbReference type="OrthoDB" id="124855at2759"/>
<dbReference type="PAN-GO" id="Q9UBU8">
    <property type="GO annotations" value="4 GO annotations based on evolutionary models"/>
</dbReference>
<dbReference type="PhylomeDB" id="Q9UBU8"/>
<dbReference type="TreeFam" id="TF323400"/>
<dbReference type="PathwayCommons" id="Q9UBU8"/>
<dbReference type="Reactome" id="R-HSA-3214847">
    <property type="pathway name" value="HATs acetylate histones"/>
</dbReference>
<dbReference type="SignaLink" id="Q9UBU8"/>
<dbReference type="SIGNOR" id="Q9UBU8"/>
<dbReference type="BioGRID-ORCS" id="10933">
    <property type="hits" value="36 hits in 1168 CRISPR screens"/>
</dbReference>
<dbReference type="CD-CODE" id="91857CE7">
    <property type="entry name" value="Nucleolus"/>
</dbReference>
<dbReference type="ChiTaRS" id="MORF4L1">
    <property type="organism name" value="human"/>
</dbReference>
<dbReference type="EvolutionaryTrace" id="Q9UBU8"/>
<dbReference type="GeneWiki" id="MORF4L1"/>
<dbReference type="GenomeRNAi" id="10933"/>
<dbReference type="Pharos" id="Q9UBU8">
    <property type="development level" value="Tbio"/>
</dbReference>
<dbReference type="PRO" id="PR:Q9UBU8"/>
<dbReference type="Proteomes" id="UP000005640">
    <property type="component" value="Chromosome 15"/>
</dbReference>
<dbReference type="RNAct" id="Q9UBU8">
    <property type="molecule type" value="protein"/>
</dbReference>
<dbReference type="Bgee" id="ENSG00000185787">
    <property type="expression patterns" value="Expressed in lateral nuclear group of thalamus and 211 other cell types or tissues"/>
</dbReference>
<dbReference type="ExpressionAtlas" id="Q9UBU8">
    <property type="expression patterns" value="baseline and differential"/>
</dbReference>
<dbReference type="GO" id="GO:0035267">
    <property type="term" value="C:NuA4 histone acetyltransferase complex"/>
    <property type="evidence" value="ECO:0000314"/>
    <property type="project" value="UniProtKB"/>
</dbReference>
<dbReference type="GO" id="GO:0016607">
    <property type="term" value="C:nuclear speck"/>
    <property type="evidence" value="ECO:0000314"/>
    <property type="project" value="HPA"/>
</dbReference>
<dbReference type="GO" id="GO:0005654">
    <property type="term" value="C:nucleoplasm"/>
    <property type="evidence" value="ECO:0000304"/>
    <property type="project" value="Reactome"/>
</dbReference>
<dbReference type="GO" id="GO:0000786">
    <property type="term" value="C:nucleosome"/>
    <property type="evidence" value="ECO:0000314"/>
    <property type="project" value="ComplexPortal"/>
</dbReference>
<dbReference type="GO" id="GO:0070822">
    <property type="term" value="C:Sin3-type complex"/>
    <property type="evidence" value="ECO:0000314"/>
    <property type="project" value="UniProtKB"/>
</dbReference>
<dbReference type="GO" id="GO:0003682">
    <property type="term" value="F:chromatin binding"/>
    <property type="evidence" value="ECO:0007669"/>
    <property type="project" value="Ensembl"/>
</dbReference>
<dbReference type="GO" id="GO:0006325">
    <property type="term" value="P:chromatin organization"/>
    <property type="evidence" value="ECO:0007669"/>
    <property type="project" value="UniProtKB-KW"/>
</dbReference>
<dbReference type="GO" id="GO:0000724">
    <property type="term" value="P:double-strand break repair via homologous recombination"/>
    <property type="evidence" value="ECO:0000314"/>
    <property type="project" value="UniProtKB"/>
</dbReference>
<dbReference type="GO" id="GO:0048144">
    <property type="term" value="P:fibroblast proliferation"/>
    <property type="evidence" value="ECO:0007669"/>
    <property type="project" value="Ensembl"/>
</dbReference>
<dbReference type="GO" id="GO:0045893">
    <property type="term" value="P:positive regulation of DNA-templated transcription"/>
    <property type="evidence" value="ECO:0000303"/>
    <property type="project" value="ComplexPortal"/>
</dbReference>
<dbReference type="GO" id="GO:1905168">
    <property type="term" value="P:positive regulation of double-strand break repair via homologous recombination"/>
    <property type="evidence" value="ECO:0000314"/>
    <property type="project" value="ComplexPortal"/>
</dbReference>
<dbReference type="GO" id="GO:0042981">
    <property type="term" value="P:regulation of apoptotic process"/>
    <property type="evidence" value="ECO:0000303"/>
    <property type="project" value="ComplexPortal"/>
</dbReference>
<dbReference type="GO" id="GO:0051726">
    <property type="term" value="P:regulation of cell cycle"/>
    <property type="evidence" value="ECO:0000315"/>
    <property type="project" value="ComplexPortal"/>
</dbReference>
<dbReference type="GO" id="GO:2000779">
    <property type="term" value="P:regulation of double-strand break repair"/>
    <property type="evidence" value="ECO:0000303"/>
    <property type="project" value="ComplexPortal"/>
</dbReference>
<dbReference type="CDD" id="cd18983">
    <property type="entry name" value="CBD_MSL3_like"/>
    <property type="match status" value="1"/>
</dbReference>
<dbReference type="FunFam" id="1.10.274.30:FF:000001">
    <property type="entry name" value="Mortality factor 4-like protein 1"/>
    <property type="match status" value="1"/>
</dbReference>
<dbReference type="Gene3D" id="2.30.30.140">
    <property type="match status" value="1"/>
</dbReference>
<dbReference type="Gene3D" id="1.10.274.30">
    <property type="entry name" value="MRG domain"/>
    <property type="match status" value="1"/>
</dbReference>
<dbReference type="IDEAL" id="IID00330"/>
<dbReference type="InterPro" id="IPR016197">
    <property type="entry name" value="Chromo-like_dom_sf"/>
</dbReference>
<dbReference type="InterPro" id="IPR008676">
    <property type="entry name" value="MRG"/>
</dbReference>
<dbReference type="InterPro" id="IPR038217">
    <property type="entry name" value="MRG_C_sf"/>
</dbReference>
<dbReference type="InterPro" id="IPR026541">
    <property type="entry name" value="MRG_dom"/>
</dbReference>
<dbReference type="InterPro" id="IPR025995">
    <property type="entry name" value="Tudor-knot"/>
</dbReference>
<dbReference type="PANTHER" id="PTHR10880">
    <property type="entry name" value="MORTALITY FACTOR 4-LIKE PROTEIN"/>
    <property type="match status" value="1"/>
</dbReference>
<dbReference type="PANTHER" id="PTHR10880:SF29">
    <property type="entry name" value="MORTALITY FACTOR 4-LIKE PROTEIN 1"/>
    <property type="match status" value="1"/>
</dbReference>
<dbReference type="Pfam" id="PF05712">
    <property type="entry name" value="MRG"/>
    <property type="match status" value="1"/>
</dbReference>
<dbReference type="Pfam" id="PF11717">
    <property type="entry name" value="Tudor-knot"/>
    <property type="match status" value="1"/>
</dbReference>
<dbReference type="PIRSF" id="PIRSF038133">
    <property type="entry name" value="HAT_Nua4_EAF3/MRG15"/>
    <property type="match status" value="1"/>
</dbReference>
<dbReference type="SUPFAM" id="SSF54160">
    <property type="entry name" value="Chromo domain-like"/>
    <property type="match status" value="1"/>
</dbReference>
<dbReference type="PROSITE" id="PS51640">
    <property type="entry name" value="MRG"/>
    <property type="match status" value="1"/>
</dbReference>
<keyword id="KW-0002">3D-structure</keyword>
<keyword id="KW-0007">Acetylation</keyword>
<keyword id="KW-0025">Alternative splicing</keyword>
<keyword id="KW-0156">Chromatin regulator</keyword>
<keyword id="KW-0903">Direct protein sequencing</keyword>
<keyword id="KW-0227">DNA damage</keyword>
<keyword id="KW-0233">DNA recombination</keyword>
<keyword id="KW-0234">DNA repair</keyword>
<keyword id="KW-0341">Growth regulation</keyword>
<keyword id="KW-0539">Nucleus</keyword>
<keyword id="KW-1267">Proteomics identification</keyword>
<keyword id="KW-1185">Reference proteome</keyword>
<keyword id="KW-0804">Transcription</keyword>
<keyword id="KW-0805">Transcription regulation</keyword>
<evidence type="ECO:0000255" key="1"/>
<evidence type="ECO:0000255" key="2">
    <source>
        <dbReference type="PROSITE-ProRule" id="PRU00972"/>
    </source>
</evidence>
<evidence type="ECO:0000256" key="3">
    <source>
        <dbReference type="SAM" id="MobiDB-lite"/>
    </source>
</evidence>
<evidence type="ECO:0000269" key="4">
    <source>
    </source>
</evidence>
<evidence type="ECO:0000269" key="5">
    <source>
    </source>
</evidence>
<evidence type="ECO:0000269" key="6">
    <source>
    </source>
</evidence>
<evidence type="ECO:0000269" key="7">
    <source>
    </source>
</evidence>
<evidence type="ECO:0000269" key="8">
    <source>
    </source>
</evidence>
<evidence type="ECO:0000269" key="9">
    <source>
    </source>
</evidence>
<evidence type="ECO:0000269" key="10">
    <source>
    </source>
</evidence>
<evidence type="ECO:0000269" key="11">
    <source>
    </source>
</evidence>
<evidence type="ECO:0000269" key="12">
    <source>
    </source>
</evidence>
<evidence type="ECO:0000269" key="13">
    <source>
    </source>
</evidence>
<evidence type="ECO:0000269" key="14">
    <source>
    </source>
</evidence>
<evidence type="ECO:0000303" key="15">
    <source>
    </source>
</evidence>
<evidence type="ECO:0000303" key="16">
    <source>
    </source>
</evidence>
<evidence type="ECO:0000303" key="17">
    <source>
    </source>
</evidence>
<evidence type="ECO:0000303" key="18">
    <source>
    </source>
</evidence>
<evidence type="ECO:0000303" key="19">
    <source>
    </source>
</evidence>
<evidence type="ECO:0000303" key="20">
    <source>
    </source>
</evidence>
<evidence type="ECO:0000303" key="21">
    <source ref="2"/>
</evidence>
<evidence type="ECO:0000303" key="22">
    <source ref="6"/>
</evidence>
<evidence type="ECO:0000305" key="23"/>
<evidence type="ECO:0000305" key="24">
    <source>
    </source>
</evidence>
<evidence type="ECO:0000312" key="25">
    <source>
        <dbReference type="HGNC" id="HGNC:16989"/>
    </source>
</evidence>
<evidence type="ECO:0007744" key="26">
    <source>
        <dbReference type="PDB" id="8BPA"/>
    </source>
</evidence>
<evidence type="ECO:0007744" key="27">
    <source>
        <dbReference type="PDB" id="8C60"/>
    </source>
</evidence>
<evidence type="ECO:0007744" key="28">
    <source>
    </source>
</evidence>
<evidence type="ECO:0007829" key="29">
    <source>
        <dbReference type="PDB" id="2EFI"/>
    </source>
</evidence>
<evidence type="ECO:0007829" key="30">
    <source>
        <dbReference type="PDB" id="2F5J"/>
    </source>
</evidence>
<evidence type="ECO:0007829" key="31">
    <source>
        <dbReference type="PDB" id="2F5K"/>
    </source>
</evidence>
<evidence type="ECO:0007829" key="32">
    <source>
        <dbReference type="PDB" id="2LKM"/>
    </source>
</evidence>
<evidence type="ECO:0007829" key="33">
    <source>
        <dbReference type="PDB" id="6AGO"/>
    </source>
</evidence>
<evidence type="ECO:0007829" key="34">
    <source>
        <dbReference type="PDB" id="7S4A"/>
    </source>
</evidence>
<proteinExistence type="evidence at protein level"/>
<organism>
    <name type="scientific">Homo sapiens</name>
    <name type="common">Human</name>
    <dbReference type="NCBI Taxonomy" id="9606"/>
    <lineage>
        <taxon>Eukaryota</taxon>
        <taxon>Metazoa</taxon>
        <taxon>Chordata</taxon>
        <taxon>Craniata</taxon>
        <taxon>Vertebrata</taxon>
        <taxon>Euteleostomi</taxon>
        <taxon>Mammalia</taxon>
        <taxon>Eutheria</taxon>
        <taxon>Euarchontoglires</taxon>
        <taxon>Primates</taxon>
        <taxon>Haplorrhini</taxon>
        <taxon>Catarrhini</taxon>
        <taxon>Hominidae</taxon>
        <taxon>Homo</taxon>
    </lineage>
</organism>
<reference key="1">
    <citation type="journal article" date="1999" name="Mol. Cell. Biol.">
        <title>Identification of a gene that reverses the immortal phenotype of a subset of cells and is a member of a novel family of transcription factor-like genes.</title>
        <authorList>
            <person name="Bertram M.J."/>
            <person name="Berube N.G."/>
            <person name="Hang-Swanson X."/>
            <person name="Ran Q."/>
            <person name="Leung J.K."/>
            <person name="Bryce S."/>
            <person name="Spurgers K."/>
            <person name="Bick R.J."/>
            <person name="Baldini A."/>
            <person name="Ning Y."/>
            <person name="Clark L.J."/>
            <person name="Parkinson E.K."/>
            <person name="Barrett J.C."/>
            <person name="Smith J.R."/>
            <person name="Pereira-Smith O.M."/>
        </authorList>
    </citation>
    <scope>NUCLEOTIDE SEQUENCE [MRNA] (ISOFORM 2)</scope>
</reference>
<reference key="2">
    <citation type="submission" date="1999-07" db="EMBL/GenBank/DDBJ databases">
        <title>Two human homologs of the Drosophila dosage compensation gene msl-3 are located on the X chromosome.</title>
        <authorList>
            <person name="D'Esposito M."/>
            <person name="Cocchia M."/>
            <person name="Matarazzo M.R."/>
            <person name="Macmillan S."/>
            <person name="Mazzarella R."/>
        </authorList>
    </citation>
    <scope>NUCLEOTIDE SEQUENCE [MRNA] (ISOFORM 2)</scope>
</reference>
<reference key="3">
    <citation type="journal article" date="2004" name="Proc. Natl. Acad. Sci. U.S.A.">
        <title>Large-scale cDNA transfection screening for genes related to cancer development and progression.</title>
        <authorList>
            <person name="Wan D."/>
            <person name="Gong Y."/>
            <person name="Qin W."/>
            <person name="Zhang P."/>
            <person name="Li J."/>
            <person name="Wei L."/>
            <person name="Zhou X."/>
            <person name="Li H."/>
            <person name="Qiu X."/>
            <person name="Zhong F."/>
            <person name="He L."/>
            <person name="Yu J."/>
            <person name="Yao G."/>
            <person name="Jiang H."/>
            <person name="Qian L."/>
            <person name="Yu Y."/>
            <person name="Shu H."/>
            <person name="Chen X."/>
            <person name="Xu H."/>
            <person name="Guo M."/>
            <person name="Pan Z."/>
            <person name="Chen Y."/>
            <person name="Ge C."/>
            <person name="Yang S."/>
            <person name="Gu J."/>
        </authorList>
    </citation>
    <scope>NUCLEOTIDE SEQUENCE [LARGE SCALE MRNA] (ISOFORM 1)</scope>
</reference>
<reference key="4">
    <citation type="submission" date="2002-09" db="EMBL/GenBank/DDBJ databases">
        <title>Cloning and identification of cellular senescence associated genes from fibroblasts 2BS.</title>
        <authorList>
            <person name="Guo S."/>
            <person name="Tong T."/>
            <person name="Zhang Z."/>
        </authorList>
    </citation>
    <scope>NUCLEOTIDE SEQUENCE [MRNA] (ISOFORM 1)</scope>
    <source>
        <tissue>Lung</tissue>
    </source>
</reference>
<reference key="5">
    <citation type="journal article" date="2000" name="Genome Res.">
        <title>Cloning and functional analysis of cDNAs with open reading frames for 300 previously undefined genes expressed in CD34+ hematopoietic stem/progenitor cells.</title>
        <authorList>
            <person name="Zhang Q.-H."/>
            <person name="Ye M."/>
            <person name="Wu X.-Y."/>
            <person name="Ren S.-X."/>
            <person name="Zhao M."/>
            <person name="Zhao C.-J."/>
            <person name="Fu G."/>
            <person name="Shen Y."/>
            <person name="Fan H.-Y."/>
            <person name="Lu G."/>
            <person name="Zhong M."/>
            <person name="Xu X.-R."/>
            <person name="Han Z.-G."/>
            <person name="Zhang J.-W."/>
            <person name="Tao J."/>
            <person name="Huang Q.-H."/>
            <person name="Zhou J."/>
            <person name="Hu G.-X."/>
            <person name="Gu J."/>
            <person name="Chen S.-J."/>
            <person name="Chen Z."/>
        </authorList>
    </citation>
    <scope>NUCLEOTIDE SEQUENCE [LARGE SCALE MRNA] (ISOFORM 2)</scope>
    <source>
        <tissue>Umbilical cord blood</tissue>
    </source>
</reference>
<reference key="6">
    <citation type="submission" date="1998-11" db="EMBL/GenBank/DDBJ databases">
        <authorList>
            <person name="Liu B."/>
            <person name="Zhao B."/>
            <person name="Wang X.Y."/>
            <person name="Xu Y.Y."/>
            <person name="Liu Y.Q."/>
            <person name="Song L."/>
            <person name="Ye J."/>
            <person name="Sheng H."/>
            <person name="Gao Y."/>
            <person name="Zhang C.L."/>
            <person name="Wei Y.J."/>
            <person name="Zhang J."/>
            <person name="Song L."/>
            <person name="Jiang Y.X."/>
            <person name="Zhao Z.W."/>
            <person name="Ding J.F."/>
            <person name="Liu L.S."/>
            <person name="Gao R.L."/>
            <person name="Wu Q.Y."/>
            <person name="Qiang B.Q."/>
            <person name="Yuan J.G."/>
            <person name="Liew C.C."/>
            <person name="Zhao M.S."/>
            <person name="Hui R.T."/>
        </authorList>
    </citation>
    <scope>NUCLEOTIDE SEQUENCE [LARGE SCALE MRNA] (ISOFORM 2)</scope>
    <source>
        <tissue>Aorta</tissue>
    </source>
</reference>
<reference key="7">
    <citation type="journal article" date="2004" name="Nat. Genet.">
        <title>Complete sequencing and characterization of 21,243 full-length human cDNAs.</title>
        <authorList>
            <person name="Ota T."/>
            <person name="Suzuki Y."/>
            <person name="Nishikawa T."/>
            <person name="Otsuki T."/>
            <person name="Sugiyama T."/>
            <person name="Irie R."/>
            <person name="Wakamatsu A."/>
            <person name="Hayashi K."/>
            <person name="Sato H."/>
            <person name="Nagai K."/>
            <person name="Kimura K."/>
            <person name="Makita H."/>
            <person name="Sekine M."/>
            <person name="Obayashi M."/>
            <person name="Nishi T."/>
            <person name="Shibahara T."/>
            <person name="Tanaka T."/>
            <person name="Ishii S."/>
            <person name="Yamamoto J."/>
            <person name="Saito K."/>
            <person name="Kawai Y."/>
            <person name="Isono Y."/>
            <person name="Nakamura Y."/>
            <person name="Nagahari K."/>
            <person name="Murakami K."/>
            <person name="Yasuda T."/>
            <person name="Iwayanagi T."/>
            <person name="Wagatsuma M."/>
            <person name="Shiratori A."/>
            <person name="Sudo H."/>
            <person name="Hosoiri T."/>
            <person name="Kaku Y."/>
            <person name="Kodaira H."/>
            <person name="Kondo H."/>
            <person name="Sugawara M."/>
            <person name="Takahashi M."/>
            <person name="Kanda K."/>
            <person name="Yokoi T."/>
            <person name="Furuya T."/>
            <person name="Kikkawa E."/>
            <person name="Omura Y."/>
            <person name="Abe K."/>
            <person name="Kamihara K."/>
            <person name="Katsuta N."/>
            <person name="Sato K."/>
            <person name="Tanikawa M."/>
            <person name="Yamazaki M."/>
            <person name="Ninomiya K."/>
            <person name="Ishibashi T."/>
            <person name="Yamashita H."/>
            <person name="Murakawa K."/>
            <person name="Fujimori K."/>
            <person name="Tanai H."/>
            <person name="Kimata M."/>
            <person name="Watanabe M."/>
            <person name="Hiraoka S."/>
            <person name="Chiba Y."/>
            <person name="Ishida S."/>
            <person name="Ono Y."/>
            <person name="Takiguchi S."/>
            <person name="Watanabe S."/>
            <person name="Yosida M."/>
            <person name="Hotuta T."/>
            <person name="Kusano J."/>
            <person name="Kanehori K."/>
            <person name="Takahashi-Fujii A."/>
            <person name="Hara H."/>
            <person name="Tanase T.-O."/>
            <person name="Nomura Y."/>
            <person name="Togiya S."/>
            <person name="Komai F."/>
            <person name="Hara R."/>
            <person name="Takeuchi K."/>
            <person name="Arita M."/>
            <person name="Imose N."/>
            <person name="Musashino K."/>
            <person name="Yuuki H."/>
            <person name="Oshima A."/>
            <person name="Sasaki N."/>
            <person name="Aotsuka S."/>
            <person name="Yoshikawa Y."/>
            <person name="Matsunawa H."/>
            <person name="Ichihara T."/>
            <person name="Shiohata N."/>
            <person name="Sano S."/>
            <person name="Moriya S."/>
            <person name="Momiyama H."/>
            <person name="Satoh N."/>
            <person name="Takami S."/>
            <person name="Terashima Y."/>
            <person name="Suzuki O."/>
            <person name="Nakagawa S."/>
            <person name="Senoh A."/>
            <person name="Mizoguchi H."/>
            <person name="Goto Y."/>
            <person name="Shimizu F."/>
            <person name="Wakebe H."/>
            <person name="Hishigaki H."/>
            <person name="Watanabe T."/>
            <person name="Sugiyama A."/>
            <person name="Takemoto M."/>
            <person name="Kawakami B."/>
            <person name="Yamazaki M."/>
            <person name="Watanabe K."/>
            <person name="Kumagai A."/>
            <person name="Itakura S."/>
            <person name="Fukuzumi Y."/>
            <person name="Fujimori Y."/>
            <person name="Komiyama M."/>
            <person name="Tashiro H."/>
            <person name="Tanigami A."/>
            <person name="Fujiwara T."/>
            <person name="Ono T."/>
            <person name="Yamada K."/>
            <person name="Fujii Y."/>
            <person name="Ozaki K."/>
            <person name="Hirao M."/>
            <person name="Ohmori Y."/>
            <person name="Kawabata A."/>
            <person name="Hikiji T."/>
            <person name="Kobatake N."/>
            <person name="Inagaki H."/>
            <person name="Ikema Y."/>
            <person name="Okamoto S."/>
            <person name="Okitani R."/>
            <person name="Kawakami T."/>
            <person name="Noguchi S."/>
            <person name="Itoh T."/>
            <person name="Shigeta K."/>
            <person name="Senba T."/>
            <person name="Matsumura K."/>
            <person name="Nakajima Y."/>
            <person name="Mizuno T."/>
            <person name="Morinaga M."/>
            <person name="Sasaki M."/>
            <person name="Togashi T."/>
            <person name="Oyama M."/>
            <person name="Hata H."/>
            <person name="Watanabe M."/>
            <person name="Komatsu T."/>
            <person name="Mizushima-Sugano J."/>
            <person name="Satoh T."/>
            <person name="Shirai Y."/>
            <person name="Takahashi Y."/>
            <person name="Nakagawa K."/>
            <person name="Okumura K."/>
            <person name="Nagase T."/>
            <person name="Nomura N."/>
            <person name="Kikuchi H."/>
            <person name="Masuho Y."/>
            <person name="Yamashita R."/>
            <person name="Nakai K."/>
            <person name="Yada T."/>
            <person name="Nakamura Y."/>
            <person name="Ohara O."/>
            <person name="Isogai T."/>
            <person name="Sugano S."/>
        </authorList>
    </citation>
    <scope>NUCLEOTIDE SEQUENCE [LARGE SCALE MRNA] (ISOFORMS 1 AND 3)</scope>
    <source>
        <tissue>Colon</tissue>
        <tissue>Embryonic stem cell</tissue>
    </source>
</reference>
<reference key="8">
    <citation type="journal article" date="2007" name="BMC Genomics">
        <title>The full-ORF clone resource of the German cDNA consortium.</title>
        <authorList>
            <person name="Bechtel S."/>
            <person name="Rosenfelder H."/>
            <person name="Duda A."/>
            <person name="Schmidt C.P."/>
            <person name="Ernst U."/>
            <person name="Wellenreuther R."/>
            <person name="Mehrle A."/>
            <person name="Schuster C."/>
            <person name="Bahr A."/>
            <person name="Bloecker H."/>
            <person name="Heubner D."/>
            <person name="Hoerlein A."/>
            <person name="Michel G."/>
            <person name="Wedler H."/>
            <person name="Koehrer K."/>
            <person name="Ottenwaelder B."/>
            <person name="Poustka A."/>
            <person name="Wiemann S."/>
            <person name="Schupp I."/>
        </authorList>
    </citation>
    <scope>NUCLEOTIDE SEQUENCE [LARGE SCALE MRNA] (ISOFORM 2)</scope>
    <source>
        <tissue>Kidney</tissue>
    </source>
</reference>
<reference key="9">
    <citation type="journal article" date="2006" name="Nature">
        <title>Analysis of the DNA sequence and duplication history of human chromosome 15.</title>
        <authorList>
            <person name="Zody M.C."/>
            <person name="Garber M."/>
            <person name="Sharpe T."/>
            <person name="Young S.K."/>
            <person name="Rowen L."/>
            <person name="O'Neill K."/>
            <person name="Whittaker C.A."/>
            <person name="Kamal M."/>
            <person name="Chang J.L."/>
            <person name="Cuomo C.A."/>
            <person name="Dewar K."/>
            <person name="FitzGerald M.G."/>
            <person name="Kodira C.D."/>
            <person name="Madan A."/>
            <person name="Qin S."/>
            <person name="Yang X."/>
            <person name="Abbasi N."/>
            <person name="Abouelleil A."/>
            <person name="Arachchi H.M."/>
            <person name="Baradarani L."/>
            <person name="Birditt B."/>
            <person name="Bloom S."/>
            <person name="Bloom T."/>
            <person name="Borowsky M.L."/>
            <person name="Burke J."/>
            <person name="Butler J."/>
            <person name="Cook A."/>
            <person name="DeArellano K."/>
            <person name="DeCaprio D."/>
            <person name="Dorris L. III"/>
            <person name="Dors M."/>
            <person name="Eichler E.E."/>
            <person name="Engels R."/>
            <person name="Fahey J."/>
            <person name="Fleetwood P."/>
            <person name="Friedman C."/>
            <person name="Gearin G."/>
            <person name="Hall J.L."/>
            <person name="Hensley G."/>
            <person name="Johnson E."/>
            <person name="Jones C."/>
            <person name="Kamat A."/>
            <person name="Kaur A."/>
            <person name="Locke D.P."/>
            <person name="Madan A."/>
            <person name="Munson G."/>
            <person name="Jaffe D.B."/>
            <person name="Lui A."/>
            <person name="Macdonald P."/>
            <person name="Mauceli E."/>
            <person name="Naylor J.W."/>
            <person name="Nesbitt R."/>
            <person name="Nicol R."/>
            <person name="O'Leary S.B."/>
            <person name="Ratcliffe A."/>
            <person name="Rounsley S."/>
            <person name="She X."/>
            <person name="Sneddon K.M.B."/>
            <person name="Stewart S."/>
            <person name="Sougnez C."/>
            <person name="Stone S.M."/>
            <person name="Topham K."/>
            <person name="Vincent D."/>
            <person name="Wang S."/>
            <person name="Zimmer A.R."/>
            <person name="Birren B.W."/>
            <person name="Hood L."/>
            <person name="Lander E.S."/>
            <person name="Nusbaum C."/>
        </authorList>
    </citation>
    <scope>NUCLEOTIDE SEQUENCE [LARGE SCALE GENOMIC DNA]</scope>
</reference>
<reference key="10">
    <citation type="submission" date="2005-09" db="EMBL/GenBank/DDBJ databases">
        <authorList>
            <person name="Mural R.J."/>
            <person name="Istrail S."/>
            <person name="Sutton G.G."/>
            <person name="Florea L."/>
            <person name="Halpern A.L."/>
            <person name="Mobarry C.M."/>
            <person name="Lippert R."/>
            <person name="Walenz B."/>
            <person name="Shatkay H."/>
            <person name="Dew I."/>
            <person name="Miller J.R."/>
            <person name="Flanigan M.J."/>
            <person name="Edwards N.J."/>
            <person name="Bolanos R."/>
            <person name="Fasulo D."/>
            <person name="Halldorsson B.V."/>
            <person name="Hannenhalli S."/>
            <person name="Turner R."/>
            <person name="Yooseph S."/>
            <person name="Lu F."/>
            <person name="Nusskern D.R."/>
            <person name="Shue B.C."/>
            <person name="Zheng X.H."/>
            <person name="Zhong F."/>
            <person name="Delcher A.L."/>
            <person name="Huson D.H."/>
            <person name="Kravitz S.A."/>
            <person name="Mouchard L."/>
            <person name="Reinert K."/>
            <person name="Remington K.A."/>
            <person name="Clark A.G."/>
            <person name="Waterman M.S."/>
            <person name="Eichler E.E."/>
            <person name="Adams M.D."/>
            <person name="Hunkapiller M.W."/>
            <person name="Myers E.W."/>
            <person name="Venter J.C."/>
        </authorList>
    </citation>
    <scope>NUCLEOTIDE SEQUENCE [LARGE SCALE GENOMIC DNA]</scope>
</reference>
<reference key="11">
    <citation type="journal article" date="2004" name="Genome Res.">
        <title>The status, quality, and expansion of the NIH full-length cDNA project: the Mammalian Gene Collection (MGC).</title>
        <authorList>
            <consortium name="The MGC Project Team"/>
        </authorList>
    </citation>
    <scope>NUCLEOTIDE SEQUENCE [LARGE SCALE MRNA] (ISOFORMS 2 AND 3)</scope>
    <source>
        <tissue>Embryonic stem cell</tissue>
        <tissue>Skin</tissue>
        <tissue>Testis</tissue>
    </source>
</reference>
<reference key="12">
    <citation type="journal article" date="2003" name="J. Biol. Chem.">
        <title>Identification of new subunits of the multiprotein mammalian TRRAP/TIP60-containing histone acetyltransferase complex.</title>
        <authorList>
            <person name="Cai Y."/>
            <person name="Jin J."/>
            <person name="Tomomori-Sato C."/>
            <person name="Sato S."/>
            <person name="Sorokina I."/>
            <person name="Parmely T.J."/>
            <person name="Conaway R.C."/>
            <person name="Conaway J.W."/>
        </authorList>
    </citation>
    <scope>PROTEIN SEQUENCE OF 17-29; 42-51; 118-127; 156-173; 179-192; 228-240; 244-261 AND 340-359</scope>
    <scope>IDENTIFICATION IN NUA4 COMPLEX</scope>
</reference>
<reference key="13">
    <citation type="submission" date="1999-02" db="EMBL/GenBank/DDBJ databases">
        <authorList>
            <person name="Mei G."/>
            <person name="Yu W."/>
            <person name="Gibbs R.A."/>
        </authorList>
    </citation>
    <scope>NUCLEOTIDE SEQUENCE [LARGE SCALE MRNA] OF 120-362 (ISOFORMS 1/2)</scope>
    <source>
        <tissue>Brain</tissue>
    </source>
</reference>
<reference key="14">
    <citation type="journal article" date="2001" name="J. Biol. Chem.">
        <title>MRG15 activates the B-myb promoter through formation of a nuclear complex with the retinoblastoma protein and the novel protein PAM14.</title>
        <authorList>
            <person name="Leung J.K."/>
            <person name="Berube N."/>
            <person name="Venable S."/>
            <person name="Ahmed S."/>
            <person name="Timchenko N."/>
            <person name="Pereira-Smith O.M."/>
        </authorList>
    </citation>
    <scope>INTERACTION WITH MRFAP1 AND RB1</scope>
</reference>
<reference key="15">
    <citation type="journal article" date="2002" name="J. Biol. Chem.">
        <title>MRG15, a novel chromodomain protein, is present in two distinct multiprotein complexes involved in transcriptional activation.</title>
        <authorList>
            <person name="Pardo P.S."/>
            <person name="Leung J.K."/>
            <person name="Lucchesi J.C."/>
            <person name="Pereira-Smith O.M."/>
        </authorList>
    </citation>
    <scope>IDENTIFICATION IN COMPLEX WITH RB1 AND MRFAP1</scope>
    <scope>INTERACTION WITH RB1 AND KAT8</scope>
</reference>
<reference key="16">
    <citation type="journal article" date="2002" name="Mol. Cell. Biol.">
        <title>Role for the mortality factors MORF4, MRGX, and MRG15 in transcriptional repression via associations with Pf1, mSin3A, and transducin-like enhancer of Split.</title>
        <authorList>
            <person name="Yochum G.S."/>
            <person name="Ayer D.E."/>
        </authorList>
    </citation>
    <scope>INTERACTION WITH PHF12; SIN3A AND TLE FAMILY MEMBERS</scope>
    <scope>FUNCTION</scope>
</reference>
<reference key="17">
    <citation type="journal article" date="2004" name="Curr. Opin. Genet. Dev.">
        <title>The highly conserved and multifunctional NuA4 HAT complex.</title>
        <authorList>
            <person name="Doyon Y."/>
            <person name="Cote J."/>
        </authorList>
    </citation>
    <scope>REVIEW ON NUA4 COMPLEX</scope>
</reference>
<reference key="18">
    <citation type="journal article" date="2004" name="Mol. Cell. Biol.">
        <title>Structural and functional conservation of the NuA4 histone acetyltransferase complex from yeast to humans.</title>
        <authorList>
            <person name="Doyon Y."/>
            <person name="Selleck W."/>
            <person name="Lane W.S."/>
            <person name="Tan S."/>
            <person name="Cote J."/>
        </authorList>
    </citation>
    <scope>FUNCTION</scope>
    <scope>IDENTIFICATION IN NUA4 COMPLEX</scope>
    <scope>IDENTIFICATION IN SIN3A COMPLEX</scope>
</reference>
<reference key="19">
    <citation type="journal article" date="2009" name="J. Cell. Physiol.">
        <title>p8/nupr1 regulates DNA-repair activity after double-strand gamma irradiation-induced DNA damage.</title>
        <authorList>
            <person name="Gironella M."/>
            <person name="Malicet C."/>
            <person name="Cano C."/>
            <person name="Sandi M.J."/>
            <person name="Hamidi T."/>
            <person name="Tauil R.M."/>
            <person name="Baston M."/>
            <person name="Valaco P."/>
            <person name="Moreno S."/>
            <person name="Lopez F."/>
            <person name="Neira J.L."/>
            <person name="Dagorn J.C."/>
            <person name="Iovanna J.L."/>
        </authorList>
    </citation>
    <scope>INTERACTION WITH MSL1 AND NUPR1</scope>
</reference>
<reference key="20">
    <citation type="journal article" date="2009" name="Science">
        <title>Lysine acetylation targets protein complexes and co-regulates major cellular functions.</title>
        <authorList>
            <person name="Choudhary C."/>
            <person name="Kumar C."/>
            <person name="Gnad F."/>
            <person name="Nielsen M.L."/>
            <person name="Rehman M."/>
            <person name="Walther T.C."/>
            <person name="Olsen J.V."/>
            <person name="Mann M."/>
        </authorList>
    </citation>
    <scope>ACETYLATION [LARGE SCALE ANALYSIS] AT LYS-143</scope>
    <scope>IDENTIFICATION BY MASS SPECTROMETRY [LARGE SCALE ANALYSIS]</scope>
</reference>
<reference key="21">
    <citation type="journal article" date="2010" name="J. Cell Sci.">
        <title>MRG15 binds directly to PALB2 and stimulates homology-directed repair of chromosomal breaks.</title>
        <authorList>
            <person name="Hayakawa T."/>
            <person name="Zhang F."/>
            <person name="Hayakawa N."/>
            <person name="Ohtani Y."/>
            <person name="Shinmyozu K."/>
            <person name="Nakayama J."/>
            <person name="Andreassen P.R."/>
        </authorList>
    </citation>
    <scope>FUNCTION</scope>
    <scope>INTERACTION WITH BRCA COMPLEX AND PALB2</scope>
</reference>
<reference key="22">
    <citation type="journal article" date="2011" name="BMC Syst. Biol.">
        <title>Initial characterization of the human central proteome.</title>
        <authorList>
            <person name="Burkard T.R."/>
            <person name="Planyavsky M."/>
            <person name="Kaupe I."/>
            <person name="Breitwieser F.P."/>
            <person name="Buerckstuemmer T."/>
            <person name="Bennett K.L."/>
            <person name="Superti-Furga G."/>
            <person name="Colinge J."/>
        </authorList>
    </citation>
    <scope>IDENTIFICATION BY MASS SPECTROMETRY [LARGE SCALE ANALYSIS]</scope>
</reference>
<reference key="23">
    <citation type="journal article" date="2011" name="Mol. Cell. Biol.">
        <title>A novel mammalian complex containing Sin3B mitigates histone acetylation and RNA polymerase II progression within transcribed loci.</title>
        <authorList>
            <person name="Jelinic P."/>
            <person name="Pellegrino J."/>
            <person name="David G."/>
        </authorList>
    </citation>
    <scope>FUNCTION</scope>
    <scope>IDENTIFICATION IN THE SIN3B COMPLEX</scope>
    <scope>SUBCELLULAR LOCATION</scope>
</reference>
<reference key="24">
    <citation type="journal article" date="2006" name="Protein Sci.">
        <title>The MRG domain of human MRG15 uses a shallow hydrophobic pocket to interact with the N-terminal region of PAM14.</title>
        <authorList>
            <person name="Zhang P."/>
            <person name="Zhao J."/>
            <person name="Wang B."/>
            <person name="Du J."/>
            <person name="Lu Y."/>
            <person name="Chen J."/>
            <person name="Ding J."/>
        </authorList>
    </citation>
    <scope>X-RAY CRYSTALLOGRAPHY (2.2 ANGSTROMS) OF 190-362</scope>
    <scope>INTERACTION WITH MRFAP1</scope>
</reference>
<reference key="25">
    <citation type="journal article" date="2006" name="Structure">
        <title>Multipurpose MRG domain involved in cell senescence and proliferation exhibits structural homology to a DNA-interacting domain.</title>
        <authorList>
            <person name="Bowman B.R."/>
            <person name="Moure C.M."/>
            <person name="Kirtane B.M."/>
            <person name="Welschhans R.L."/>
            <person name="Tominaga K."/>
            <person name="Pereira-Smith O.M."/>
            <person name="Quiocho F.A."/>
        </authorList>
    </citation>
    <scope>X-RAY CRYSTALLOGRAPHY (2.3 ANGSTROMS) OF 190-362</scope>
    <scope>MUTAGENESIS OF VAL-208; GLU-234; TYR-251 AND ASN-254</scope>
</reference>
<reference evidence="26 27" key="26">
    <citation type="journal article" date="2023" name="Nat. Commun.">
        <title>Mechanism of assembly, activation and lysine selection by the SIN3B histone deacetylase complex.</title>
        <authorList>
            <person name="Wan M.S.M."/>
            <person name="Muhammad R."/>
            <person name="Koliopoulos M.G."/>
            <person name="Roumeliotis T.I."/>
            <person name="Choudhary J.S."/>
            <person name="Alfieri C."/>
        </authorList>
    </citation>
    <scope>STRUCTURE BY ELECTRON MICROSCOPY (3.40 ANGSTROMS) IN COMPLEX WITH HDAC2; SIN3B AND PHF12</scope>
    <scope>SUBUNIT</scope>
    <scope>FUNCTION</scope>
</reference>
<gene>
    <name evidence="25" type="primary">MORF4L1</name>
    <name evidence="19" type="synonym">MRG15</name>
    <name type="ORF">FWP006</name>
    <name type="ORF">HSPC008</name>
    <name type="ORF">HSPC061</name>
    <name type="ORF">PP368</name>
</gene>
<protein>
    <recommendedName>
        <fullName>Mortality factor 4-like protein 1</fullName>
    </recommendedName>
    <alternativeName>
        <fullName>MORF-related gene 15 protein</fullName>
        <shortName evidence="19">MRG15</shortName>
    </alternativeName>
    <alternativeName>
        <fullName>Protein MSL3-1</fullName>
    </alternativeName>
    <alternativeName>
        <fullName>Transcription factor-like protein MRG15</fullName>
    </alternativeName>
</protein>
<feature type="chain" id="PRO_0000088764" description="Mortality factor 4-like protein 1">
    <location>
        <begin position="1"/>
        <end position="362"/>
    </location>
</feature>
<feature type="domain" description="Tudor-knot" evidence="1">
    <location>
        <begin position="12"/>
        <end position="51"/>
    </location>
</feature>
<feature type="domain" description="MRG" evidence="2">
    <location>
        <begin position="191"/>
        <end position="362"/>
    </location>
</feature>
<feature type="region of interest" description="Interaction with KAT8" evidence="6">
    <location>
        <begin position="26"/>
        <end position="62"/>
    </location>
</feature>
<feature type="region of interest" description="Disordered" evidence="3">
    <location>
        <begin position="113"/>
        <end position="182"/>
    </location>
</feature>
<feature type="region of interest" description="Sufficient for interaction with SIN3A" evidence="5">
    <location>
        <begin position="133"/>
        <end position="266"/>
    </location>
</feature>
<feature type="region of interest" description="Interaction with RB1-1">
    <location>
        <begin position="164"/>
        <end position="230"/>
    </location>
</feature>
<feature type="region of interest" description="Sufficient for interaction with PHF12" evidence="5">
    <location>
        <begin position="188"/>
        <end position="342"/>
    </location>
</feature>
<feature type="region of interest" description="Interaction with RB1-2">
    <location>
        <begin position="323"/>
        <end position="344"/>
    </location>
</feature>
<feature type="short sequence motif" description="Nuclear localization signal" evidence="1">
    <location>
        <begin position="135"/>
        <end position="146"/>
    </location>
</feature>
<feature type="modified residue" description="N6-acetyllysine" evidence="28">
    <location>
        <position position="143"/>
    </location>
</feature>
<feature type="splice variant" id="VSP_046016" description="In isoform 3." evidence="16 17">
    <location>
        <begin position="1"/>
        <end position="127"/>
    </location>
</feature>
<feature type="splice variant" id="VSP_012889" description="In isoform 2." evidence="15 17 18 20 21 22">
    <original>KSAVRPRRSEKSLKTHEDIVALFPVPEGAPSVHHPLLTSS</original>
    <variation>N</variation>
    <location>
        <begin position="52"/>
        <end position="91"/>
    </location>
</feature>
<feature type="mutagenesis site" description="Abolishes binding to MRFAP1." evidence="9">
    <original>V</original>
    <variation>E</variation>
    <location>
        <position position="208"/>
    </location>
</feature>
<feature type="mutagenesis site" description="No effect on MRFAP1 binding." evidence="9">
    <original>E</original>
    <variation>R</variation>
    <location>
        <position position="234"/>
    </location>
</feature>
<feature type="mutagenesis site" description="No effect on MRFAP1 binding." evidence="9">
    <original>Y</original>
    <variation>A</variation>
    <location>
        <position position="251"/>
    </location>
</feature>
<feature type="mutagenesis site" description="Reduces binding to MRFAP1." evidence="9">
    <original>N</original>
    <variation>C</variation>
    <location>
        <position position="254"/>
    </location>
</feature>
<feature type="sequence conflict" description="In Ref. 11; AAH67826." evidence="23" ref="11">
    <original>P</original>
    <variation>R</variation>
    <location>
        <position position="224"/>
    </location>
</feature>
<feature type="sequence conflict" description="In Ref. 6; CAB70879." evidence="23" ref="6">
    <original>K</original>
    <variation>KK</variation>
    <location>
        <position position="261"/>
    </location>
</feature>
<feature type="strand" evidence="31">
    <location>
        <begin position="16"/>
        <end position="36"/>
    </location>
</feature>
<feature type="strand" evidence="31">
    <location>
        <begin position="39"/>
        <end position="46"/>
    </location>
</feature>
<feature type="strand" evidence="29">
    <location>
        <begin position="47"/>
        <end position="49"/>
    </location>
</feature>
<feature type="strand" evidence="31">
    <location>
        <begin position="94"/>
        <end position="97"/>
    </location>
</feature>
<feature type="helix" evidence="31">
    <location>
        <begin position="98"/>
        <end position="100"/>
    </location>
</feature>
<feature type="strand" evidence="31">
    <location>
        <begin position="101"/>
        <end position="105"/>
    </location>
</feature>
<feature type="helix" evidence="31">
    <location>
        <begin position="106"/>
        <end position="125"/>
    </location>
</feature>
<feature type="helix" evidence="30">
    <location>
        <begin position="201"/>
        <end position="203"/>
    </location>
</feature>
<feature type="helix" evidence="30">
    <location>
        <begin position="204"/>
        <end position="215"/>
    </location>
</feature>
<feature type="strand" evidence="30">
    <location>
        <begin position="219"/>
        <end position="221"/>
    </location>
</feature>
<feature type="strand" evidence="30">
    <location>
        <begin position="226"/>
        <end position="228"/>
    </location>
</feature>
<feature type="helix" evidence="30">
    <location>
        <begin position="229"/>
        <end position="241"/>
    </location>
</feature>
<feature type="strand" evidence="33">
    <location>
        <begin position="242"/>
        <end position="245"/>
    </location>
</feature>
<feature type="strand" evidence="33">
    <location>
        <begin position="247"/>
        <end position="249"/>
    </location>
</feature>
<feature type="helix" evidence="30">
    <location>
        <begin position="252"/>
        <end position="271"/>
    </location>
</feature>
<feature type="helix" evidence="30">
    <location>
        <begin position="275"/>
        <end position="277"/>
    </location>
</feature>
<feature type="helix" evidence="30">
    <location>
        <begin position="278"/>
        <end position="287"/>
    </location>
</feature>
<feature type="strand" evidence="34">
    <location>
        <begin position="289"/>
        <end position="291"/>
    </location>
</feature>
<feature type="helix" evidence="30">
    <location>
        <begin position="293"/>
        <end position="296"/>
    </location>
</feature>
<feature type="helix" evidence="30">
    <location>
        <begin position="299"/>
        <end position="313"/>
    </location>
</feature>
<feature type="helix" evidence="30">
    <location>
        <begin position="320"/>
        <end position="339"/>
    </location>
</feature>
<feature type="helix" evidence="30">
    <location>
        <begin position="341"/>
        <end position="344"/>
    </location>
</feature>
<feature type="helix" evidence="30">
    <location>
        <begin position="347"/>
        <end position="349"/>
    </location>
</feature>
<feature type="strand" evidence="30">
    <location>
        <begin position="350"/>
        <end position="352"/>
    </location>
</feature>
<feature type="helix" evidence="30">
    <location>
        <begin position="355"/>
        <end position="358"/>
    </location>
</feature>
<feature type="turn" evidence="32">
    <location>
        <begin position="359"/>
        <end position="361"/>
    </location>
</feature>